<feature type="signal peptide" evidence="2">
    <location>
        <begin position="1"/>
        <end position="19"/>
    </location>
</feature>
<feature type="propeptide" id="PRO_0000404944" evidence="1">
    <location>
        <begin position="20"/>
        <end position="45"/>
    </location>
</feature>
<feature type="peptide" id="PRO_0000404945" description="Conotoxin PnMLCL-01">
    <location>
        <begin position="46"/>
        <end position="63"/>
    </location>
</feature>
<feature type="modified residue" description="Cysteine amide" evidence="1">
    <location>
        <position position="63"/>
    </location>
</feature>
<reference key="1">
    <citation type="journal article" date="2001" name="Mol. Biol. Evol.">
        <title>Mechanisms for evolving hypervariability: the case of conopeptides.</title>
        <authorList>
            <person name="Conticello S.G."/>
            <person name="Gilad Y."/>
            <person name="Avidan N."/>
            <person name="Ben-Asher E."/>
            <person name="Levy Z."/>
            <person name="Fainzilber M."/>
        </authorList>
    </citation>
    <scope>NUCLEOTIDE SEQUENCE [MRNA]</scope>
    <source>
        <tissue>Venom duct</tissue>
    </source>
</reference>
<keyword id="KW-0027">Amidation</keyword>
<keyword id="KW-1015">Disulfide bond</keyword>
<keyword id="KW-0528">Neurotoxin</keyword>
<keyword id="KW-0964">Secreted</keyword>
<keyword id="KW-0732">Signal</keyword>
<keyword id="KW-0800">Toxin</keyword>
<name>CT52_CONPE</name>
<comment type="subcellular location">
    <subcellularLocation>
        <location evidence="4">Secreted</location>
    </subcellularLocation>
</comment>
<comment type="tissue specificity">
    <text evidence="4">Expressed by the venom duct.</text>
</comment>
<comment type="domain">
    <text evidence="3">The cysteine framework is V (CC-CC).</text>
</comment>
<comment type="PTM">
    <text evidence="3">Contains 2 disulfide bonds that can be either 'C1-C3, C2-C4' or 'C1-C4, C2-C3', since these disulfide connectivities have been observed for conotoxins with cysteine framework V (for examples, see AC P0DQQ7 and AC P81755).</text>
</comment>
<comment type="similarity">
    <text evidence="3">Belongs to the conotoxin T superfamily.</text>
</comment>
<accession>Q9BPE2</accession>
<proteinExistence type="inferred from homology"/>
<protein>
    <recommendedName>
        <fullName evidence="5">Conotoxin PnMLCL-01</fullName>
    </recommendedName>
</protein>
<organism>
    <name type="scientific">Conus pennaceus</name>
    <name type="common">Feathered cone</name>
    <name type="synonym">Conus episcopus</name>
    <dbReference type="NCBI Taxonomy" id="37335"/>
    <lineage>
        <taxon>Eukaryota</taxon>
        <taxon>Metazoa</taxon>
        <taxon>Spiralia</taxon>
        <taxon>Lophotrochozoa</taxon>
        <taxon>Mollusca</taxon>
        <taxon>Gastropoda</taxon>
        <taxon>Caenogastropoda</taxon>
        <taxon>Neogastropoda</taxon>
        <taxon>Conoidea</taxon>
        <taxon>Conidae</taxon>
        <taxon>Conus</taxon>
        <taxon>Darioconus</taxon>
    </lineage>
</organism>
<sequence length="66" mass="7107">MLCLPVFIILLLLASPAASNPLEKRIQSDLIRAALEDADTKNDPRLLDYVTGACCAGLNFVCCGKK</sequence>
<evidence type="ECO:0000250" key="1"/>
<evidence type="ECO:0000255" key="2"/>
<evidence type="ECO:0000305" key="3"/>
<evidence type="ECO:0000305" key="4">
    <source>
    </source>
</evidence>
<evidence type="ECO:0000312" key="5">
    <source>
        <dbReference type="EMBL" id="AAG60418.1"/>
    </source>
</evidence>
<dbReference type="EMBL" id="AF214990">
    <property type="protein sequence ID" value="AAG60418.1"/>
    <property type="molecule type" value="mRNA"/>
</dbReference>
<dbReference type="ConoServer" id="677">
    <property type="toxin name" value="Pn5.2 precursor"/>
</dbReference>
<dbReference type="GO" id="GO:0005576">
    <property type="term" value="C:extracellular region"/>
    <property type="evidence" value="ECO:0007669"/>
    <property type="project" value="UniProtKB-SubCell"/>
</dbReference>
<dbReference type="GO" id="GO:0090729">
    <property type="term" value="F:toxin activity"/>
    <property type="evidence" value="ECO:0007669"/>
    <property type="project" value="UniProtKB-KW"/>
</dbReference>
<dbReference type="InterPro" id="IPR031565">
    <property type="entry name" value="T-conotoxin"/>
</dbReference>
<dbReference type="Pfam" id="PF16981">
    <property type="entry name" value="Chi-conotoxin"/>
    <property type="match status" value="1"/>
</dbReference>